<feature type="chain" id="PRO_1000014121" description="Ion-translocating oxidoreductase complex subunit G">
    <location>
        <begin position="1"/>
        <end position="207"/>
    </location>
</feature>
<feature type="transmembrane region" description="Helical" evidence="1">
    <location>
        <begin position="11"/>
        <end position="31"/>
    </location>
</feature>
<feature type="modified residue" description="FMN phosphoryl threonine" evidence="1">
    <location>
        <position position="175"/>
    </location>
</feature>
<dbReference type="EC" id="7.-.-.-" evidence="1"/>
<dbReference type="EMBL" id="CP000671">
    <property type="protein sequence ID" value="ABQ98139.1"/>
    <property type="molecule type" value="Genomic_DNA"/>
</dbReference>
<dbReference type="SMR" id="A5UBI8"/>
<dbReference type="KEGG" id="hip:CGSHiEE_03600"/>
<dbReference type="HOGENOM" id="CLU_077882_1_0_6"/>
<dbReference type="GO" id="GO:0005886">
    <property type="term" value="C:plasma membrane"/>
    <property type="evidence" value="ECO:0007669"/>
    <property type="project" value="UniProtKB-SubCell"/>
</dbReference>
<dbReference type="GO" id="GO:0009055">
    <property type="term" value="F:electron transfer activity"/>
    <property type="evidence" value="ECO:0007669"/>
    <property type="project" value="InterPro"/>
</dbReference>
<dbReference type="GO" id="GO:0010181">
    <property type="term" value="F:FMN binding"/>
    <property type="evidence" value="ECO:0007669"/>
    <property type="project" value="InterPro"/>
</dbReference>
<dbReference type="GO" id="GO:0022900">
    <property type="term" value="P:electron transport chain"/>
    <property type="evidence" value="ECO:0007669"/>
    <property type="project" value="UniProtKB-UniRule"/>
</dbReference>
<dbReference type="HAMAP" id="MF_00479">
    <property type="entry name" value="RsxG_RnfG"/>
    <property type="match status" value="1"/>
</dbReference>
<dbReference type="InterPro" id="IPR007329">
    <property type="entry name" value="FMN-bd"/>
</dbReference>
<dbReference type="InterPro" id="IPR010209">
    <property type="entry name" value="Ion_transpt_RnfG/RsxG"/>
</dbReference>
<dbReference type="NCBIfam" id="NF002519">
    <property type="entry name" value="PRK01908.1"/>
    <property type="match status" value="1"/>
</dbReference>
<dbReference type="NCBIfam" id="TIGR01947">
    <property type="entry name" value="rnfG"/>
    <property type="match status" value="1"/>
</dbReference>
<dbReference type="PANTHER" id="PTHR36118">
    <property type="entry name" value="ION-TRANSLOCATING OXIDOREDUCTASE COMPLEX SUBUNIT G"/>
    <property type="match status" value="1"/>
</dbReference>
<dbReference type="PANTHER" id="PTHR36118:SF1">
    <property type="entry name" value="ION-TRANSLOCATING OXIDOREDUCTASE COMPLEX SUBUNIT G"/>
    <property type="match status" value="1"/>
</dbReference>
<dbReference type="Pfam" id="PF04205">
    <property type="entry name" value="FMN_bind"/>
    <property type="match status" value="1"/>
</dbReference>
<dbReference type="PIRSF" id="PIRSF006091">
    <property type="entry name" value="E_trnsport_RnfG"/>
    <property type="match status" value="1"/>
</dbReference>
<dbReference type="SMART" id="SM00900">
    <property type="entry name" value="FMN_bind"/>
    <property type="match status" value="1"/>
</dbReference>
<accession>A5UBI8</accession>
<comment type="function">
    <text evidence="1">Part of a membrane-bound complex that couples electron transfer with translocation of ions across the membrane.</text>
</comment>
<comment type="cofactor">
    <cofactor evidence="1">
        <name>FMN</name>
        <dbReference type="ChEBI" id="CHEBI:58210"/>
    </cofactor>
</comment>
<comment type="subunit">
    <text evidence="1">The complex is composed of six subunits: RnfA, RnfB, RnfC, RnfD, RnfE and RnfG.</text>
</comment>
<comment type="subcellular location">
    <subcellularLocation>
        <location evidence="1">Cell inner membrane</location>
        <topology evidence="1">Single-pass membrane protein</topology>
    </subcellularLocation>
</comment>
<comment type="similarity">
    <text evidence="1">Belongs to the RnfG family.</text>
</comment>
<evidence type="ECO:0000255" key="1">
    <source>
        <dbReference type="HAMAP-Rule" id="MF_00479"/>
    </source>
</evidence>
<sequence length="207" mass="22938">MGTVKITSRYGILLGFIALLCTIISAGIYFLTKDKIDAVIAAQQRELLLQVIPQDYFNNNLLESAVIPQDKNFVGIQKIYFAKKDGNISAYAYETTAPDGYSGDIRLLVGLDPKGEVLGVRVIEHHETPGLGDKIERRISNWILGFTNQSINEHNLSEWAVKKDGGKFDQFSGATITPRAVVNQTKRSALIMLNNQALLQQLSTQVK</sequence>
<name>RNFG_HAEIE</name>
<keyword id="KW-0997">Cell inner membrane</keyword>
<keyword id="KW-1003">Cell membrane</keyword>
<keyword id="KW-0249">Electron transport</keyword>
<keyword id="KW-0285">Flavoprotein</keyword>
<keyword id="KW-0288">FMN</keyword>
<keyword id="KW-0472">Membrane</keyword>
<keyword id="KW-0597">Phosphoprotein</keyword>
<keyword id="KW-1278">Translocase</keyword>
<keyword id="KW-0812">Transmembrane</keyword>
<keyword id="KW-1133">Transmembrane helix</keyword>
<keyword id="KW-0813">Transport</keyword>
<protein>
    <recommendedName>
        <fullName evidence="1">Ion-translocating oxidoreductase complex subunit G</fullName>
        <ecNumber evidence="1">7.-.-.-</ecNumber>
    </recommendedName>
    <alternativeName>
        <fullName evidence="1">Rnf electron transport complex subunit G</fullName>
    </alternativeName>
</protein>
<organism>
    <name type="scientific">Haemophilus influenzae (strain PittEE)</name>
    <dbReference type="NCBI Taxonomy" id="374930"/>
    <lineage>
        <taxon>Bacteria</taxon>
        <taxon>Pseudomonadati</taxon>
        <taxon>Pseudomonadota</taxon>
        <taxon>Gammaproteobacteria</taxon>
        <taxon>Pasteurellales</taxon>
        <taxon>Pasteurellaceae</taxon>
        <taxon>Haemophilus</taxon>
    </lineage>
</organism>
<reference key="1">
    <citation type="journal article" date="2007" name="Genome Biol.">
        <title>Characterization and modeling of the Haemophilus influenzae core and supragenomes based on the complete genomic sequences of Rd and 12 clinical nontypeable strains.</title>
        <authorList>
            <person name="Hogg J.S."/>
            <person name="Hu F.Z."/>
            <person name="Janto B."/>
            <person name="Boissy R."/>
            <person name="Hayes J."/>
            <person name="Keefe R."/>
            <person name="Post J.C."/>
            <person name="Ehrlich G.D."/>
        </authorList>
    </citation>
    <scope>NUCLEOTIDE SEQUENCE [LARGE SCALE GENOMIC DNA]</scope>
    <source>
        <strain>PittEE</strain>
    </source>
</reference>
<gene>
    <name evidence="1" type="primary">rnfG</name>
    <name type="ordered locus">CGSHiEE_03600</name>
</gene>
<proteinExistence type="inferred from homology"/>